<gene>
    <name evidence="1" type="primary">rnpA</name>
    <name type="ordered locus">PSHAa3025</name>
</gene>
<organism>
    <name type="scientific">Pseudoalteromonas translucida (strain TAC 125)</name>
    <dbReference type="NCBI Taxonomy" id="326442"/>
    <lineage>
        <taxon>Bacteria</taxon>
        <taxon>Pseudomonadati</taxon>
        <taxon>Pseudomonadota</taxon>
        <taxon>Gammaproteobacteria</taxon>
        <taxon>Alteromonadales</taxon>
        <taxon>Pseudoalteromonadaceae</taxon>
        <taxon>Pseudoalteromonas</taxon>
    </lineage>
</organism>
<accession>Q3IK52</accession>
<feature type="chain" id="PRO_1000021446" description="Ribonuclease P protein component">
    <location>
        <begin position="1"/>
        <end position="140"/>
    </location>
</feature>
<feature type="region of interest" description="Disordered" evidence="2">
    <location>
        <begin position="115"/>
        <end position="140"/>
    </location>
</feature>
<dbReference type="EC" id="3.1.26.5" evidence="1"/>
<dbReference type="EMBL" id="CR954246">
    <property type="protein sequence ID" value="CAI88054.1"/>
    <property type="molecule type" value="Genomic_DNA"/>
</dbReference>
<dbReference type="SMR" id="Q3IK52"/>
<dbReference type="STRING" id="326442.PSHAa3025"/>
<dbReference type="KEGG" id="pha:PSHAa3025"/>
<dbReference type="PATRIC" id="fig|326442.8.peg.2914"/>
<dbReference type="eggNOG" id="COG0594">
    <property type="taxonomic scope" value="Bacteria"/>
</dbReference>
<dbReference type="HOGENOM" id="CLU_117179_11_0_6"/>
<dbReference type="BioCyc" id="PHAL326442:PSHA_RS14840-MONOMER"/>
<dbReference type="Proteomes" id="UP000006843">
    <property type="component" value="Chromosome I"/>
</dbReference>
<dbReference type="GO" id="GO:0030677">
    <property type="term" value="C:ribonuclease P complex"/>
    <property type="evidence" value="ECO:0007669"/>
    <property type="project" value="TreeGrafter"/>
</dbReference>
<dbReference type="GO" id="GO:0042781">
    <property type="term" value="F:3'-tRNA processing endoribonuclease activity"/>
    <property type="evidence" value="ECO:0007669"/>
    <property type="project" value="TreeGrafter"/>
</dbReference>
<dbReference type="GO" id="GO:0004526">
    <property type="term" value="F:ribonuclease P activity"/>
    <property type="evidence" value="ECO:0007669"/>
    <property type="project" value="UniProtKB-UniRule"/>
</dbReference>
<dbReference type="GO" id="GO:0000049">
    <property type="term" value="F:tRNA binding"/>
    <property type="evidence" value="ECO:0007669"/>
    <property type="project" value="UniProtKB-UniRule"/>
</dbReference>
<dbReference type="GO" id="GO:0001682">
    <property type="term" value="P:tRNA 5'-leader removal"/>
    <property type="evidence" value="ECO:0007669"/>
    <property type="project" value="UniProtKB-UniRule"/>
</dbReference>
<dbReference type="Gene3D" id="3.30.230.10">
    <property type="match status" value="1"/>
</dbReference>
<dbReference type="HAMAP" id="MF_00227">
    <property type="entry name" value="RNase_P"/>
    <property type="match status" value="1"/>
</dbReference>
<dbReference type="InterPro" id="IPR020568">
    <property type="entry name" value="Ribosomal_Su5_D2-typ_SF"/>
</dbReference>
<dbReference type="InterPro" id="IPR014721">
    <property type="entry name" value="Ribsml_uS5_D2-typ_fold_subgr"/>
</dbReference>
<dbReference type="InterPro" id="IPR000100">
    <property type="entry name" value="RNase_P"/>
</dbReference>
<dbReference type="InterPro" id="IPR020539">
    <property type="entry name" value="RNase_P_CS"/>
</dbReference>
<dbReference type="NCBIfam" id="TIGR00188">
    <property type="entry name" value="rnpA"/>
    <property type="match status" value="1"/>
</dbReference>
<dbReference type="PANTHER" id="PTHR33992">
    <property type="entry name" value="RIBONUCLEASE P PROTEIN COMPONENT"/>
    <property type="match status" value="1"/>
</dbReference>
<dbReference type="PANTHER" id="PTHR33992:SF1">
    <property type="entry name" value="RIBONUCLEASE P PROTEIN COMPONENT"/>
    <property type="match status" value="1"/>
</dbReference>
<dbReference type="Pfam" id="PF00825">
    <property type="entry name" value="Ribonuclease_P"/>
    <property type="match status" value="1"/>
</dbReference>
<dbReference type="SUPFAM" id="SSF54211">
    <property type="entry name" value="Ribosomal protein S5 domain 2-like"/>
    <property type="match status" value="1"/>
</dbReference>
<dbReference type="PROSITE" id="PS00648">
    <property type="entry name" value="RIBONUCLEASE_P"/>
    <property type="match status" value="1"/>
</dbReference>
<sequence>MEDFNFGRELRLLTPSHYSRIFNEPARAATPFFTLLAKPNDQDQPRLGLTVAKKRVKKACQRNRIKRLARECFRLNKHNIDNIDIVLMVKSGIDEQSNEELTKQLTKLWRKINERCKPGAPKPPPFKKRPNKSVKSNKQT</sequence>
<reference key="1">
    <citation type="journal article" date="2005" name="Genome Res.">
        <title>Coping with cold: the genome of the versatile marine Antarctica bacterium Pseudoalteromonas haloplanktis TAC125.</title>
        <authorList>
            <person name="Medigue C."/>
            <person name="Krin E."/>
            <person name="Pascal G."/>
            <person name="Barbe V."/>
            <person name="Bernsel A."/>
            <person name="Bertin P.N."/>
            <person name="Cheung F."/>
            <person name="Cruveiller S."/>
            <person name="D'Amico S."/>
            <person name="Duilio A."/>
            <person name="Fang G."/>
            <person name="Feller G."/>
            <person name="Ho C."/>
            <person name="Mangenot S."/>
            <person name="Marino G."/>
            <person name="Nilsson J."/>
            <person name="Parrilli E."/>
            <person name="Rocha E.P.C."/>
            <person name="Rouy Z."/>
            <person name="Sekowska A."/>
            <person name="Tutino M.L."/>
            <person name="Vallenet D."/>
            <person name="von Heijne G."/>
            <person name="Danchin A."/>
        </authorList>
    </citation>
    <scope>NUCLEOTIDE SEQUENCE [LARGE SCALE GENOMIC DNA]</scope>
    <source>
        <strain>TAC 125</strain>
    </source>
</reference>
<comment type="function">
    <text evidence="1">RNaseP catalyzes the removal of the 5'-leader sequence from pre-tRNA to produce the mature 5'-terminus. It can also cleave other RNA substrates such as 4.5S RNA. The protein component plays an auxiliary but essential role in vivo by binding to the 5'-leader sequence and broadening the substrate specificity of the ribozyme.</text>
</comment>
<comment type="catalytic activity">
    <reaction evidence="1">
        <text>Endonucleolytic cleavage of RNA, removing 5'-extranucleotides from tRNA precursor.</text>
        <dbReference type="EC" id="3.1.26.5"/>
    </reaction>
</comment>
<comment type="subunit">
    <text evidence="1">Consists of a catalytic RNA component (M1 or rnpB) and a protein subunit.</text>
</comment>
<comment type="similarity">
    <text evidence="1">Belongs to the RnpA family.</text>
</comment>
<evidence type="ECO:0000255" key="1">
    <source>
        <dbReference type="HAMAP-Rule" id="MF_00227"/>
    </source>
</evidence>
<evidence type="ECO:0000256" key="2">
    <source>
        <dbReference type="SAM" id="MobiDB-lite"/>
    </source>
</evidence>
<name>RNPA_PSET1</name>
<protein>
    <recommendedName>
        <fullName evidence="1">Ribonuclease P protein component</fullName>
        <shortName evidence="1">RNase P protein</shortName>
        <shortName evidence="1">RNaseP protein</shortName>
        <ecNumber evidence="1">3.1.26.5</ecNumber>
    </recommendedName>
    <alternativeName>
        <fullName evidence="1">Protein C5</fullName>
    </alternativeName>
</protein>
<keyword id="KW-0255">Endonuclease</keyword>
<keyword id="KW-0378">Hydrolase</keyword>
<keyword id="KW-0540">Nuclease</keyword>
<keyword id="KW-1185">Reference proteome</keyword>
<keyword id="KW-0694">RNA-binding</keyword>
<keyword id="KW-0819">tRNA processing</keyword>
<proteinExistence type="inferred from homology"/>